<organism>
    <name type="scientific">Streptococcus pneumoniae serotype 2 (strain D39 / NCTC 7466)</name>
    <dbReference type="NCBI Taxonomy" id="373153"/>
    <lineage>
        <taxon>Bacteria</taxon>
        <taxon>Bacillati</taxon>
        <taxon>Bacillota</taxon>
        <taxon>Bacilli</taxon>
        <taxon>Lactobacillales</taxon>
        <taxon>Streptococcaceae</taxon>
        <taxon>Streptococcus</taxon>
    </lineage>
</organism>
<protein>
    <recommendedName>
        <fullName evidence="1">S-ribosylhomocysteine lyase</fullName>
        <ecNumber evidence="1">4.4.1.21</ecNumber>
    </recommendedName>
    <alternativeName>
        <fullName evidence="1">AI-2 synthesis protein</fullName>
    </alternativeName>
    <alternativeName>
        <fullName evidence="1">Autoinducer-2 production protein LuxS</fullName>
    </alternativeName>
</protein>
<evidence type="ECO:0000255" key="1">
    <source>
        <dbReference type="HAMAP-Rule" id="MF_00091"/>
    </source>
</evidence>
<reference key="1">
    <citation type="journal article" date="2007" name="J. Bacteriol.">
        <title>Genome sequence of Avery's virulent serotype 2 strain D39 of Streptococcus pneumoniae and comparison with that of unencapsulated laboratory strain R6.</title>
        <authorList>
            <person name="Lanie J.A."/>
            <person name="Ng W.-L."/>
            <person name="Kazmierczak K.M."/>
            <person name="Andrzejewski T.M."/>
            <person name="Davidsen T.M."/>
            <person name="Wayne K.J."/>
            <person name="Tettelin H."/>
            <person name="Glass J.I."/>
            <person name="Winkler M.E."/>
        </authorList>
    </citation>
    <scope>NUCLEOTIDE SEQUENCE [LARGE SCALE GENOMIC DNA]</scope>
    <source>
        <strain>D39 / NCTC 7466</strain>
    </source>
</reference>
<comment type="function">
    <text evidence="1">Involved in the synthesis of autoinducer 2 (AI-2) which is secreted by bacteria and is used to communicate both the cell density and the metabolic potential of the environment. The regulation of gene expression in response to changes in cell density is called quorum sensing. Catalyzes the transformation of S-ribosylhomocysteine (RHC) to homocysteine (HC) and 4,5-dihydroxy-2,3-pentadione (DPD).</text>
</comment>
<comment type="catalytic activity">
    <reaction evidence="1">
        <text>S-(5-deoxy-D-ribos-5-yl)-L-homocysteine = (S)-4,5-dihydroxypentane-2,3-dione + L-homocysteine</text>
        <dbReference type="Rhea" id="RHEA:17753"/>
        <dbReference type="ChEBI" id="CHEBI:29484"/>
        <dbReference type="ChEBI" id="CHEBI:58195"/>
        <dbReference type="ChEBI" id="CHEBI:58199"/>
        <dbReference type="EC" id="4.4.1.21"/>
    </reaction>
</comment>
<comment type="cofactor">
    <cofactor evidence="1">
        <name>Fe cation</name>
        <dbReference type="ChEBI" id="CHEBI:24875"/>
    </cofactor>
    <text evidence="1">Binds 1 Fe cation per subunit.</text>
</comment>
<comment type="subunit">
    <text evidence="1">Homodimer.</text>
</comment>
<comment type="similarity">
    <text evidence="1">Belongs to the LuxS family.</text>
</comment>
<accession>Q04MC2</accession>
<keyword id="KW-0071">Autoinducer synthesis</keyword>
<keyword id="KW-0408">Iron</keyword>
<keyword id="KW-0456">Lyase</keyword>
<keyword id="KW-0479">Metal-binding</keyword>
<keyword id="KW-0673">Quorum sensing</keyword>
<keyword id="KW-1185">Reference proteome</keyword>
<dbReference type="EC" id="4.4.1.21" evidence="1"/>
<dbReference type="EMBL" id="CP000410">
    <property type="protein sequence ID" value="ABJ54495.1"/>
    <property type="molecule type" value="Genomic_DNA"/>
</dbReference>
<dbReference type="RefSeq" id="WP_000032550.1">
    <property type="nucleotide sequence ID" value="NZ_JAMLJR010000002.1"/>
</dbReference>
<dbReference type="SMR" id="Q04MC2"/>
<dbReference type="PaxDb" id="373153-SPD_0309"/>
<dbReference type="KEGG" id="spd:SPD_0309"/>
<dbReference type="eggNOG" id="COG1854">
    <property type="taxonomic scope" value="Bacteria"/>
</dbReference>
<dbReference type="HOGENOM" id="CLU_107531_2_1_9"/>
<dbReference type="BioCyc" id="SPNE373153:G1G6V-342-MONOMER"/>
<dbReference type="Proteomes" id="UP000001452">
    <property type="component" value="Chromosome"/>
</dbReference>
<dbReference type="GO" id="GO:0005506">
    <property type="term" value="F:iron ion binding"/>
    <property type="evidence" value="ECO:0007669"/>
    <property type="project" value="InterPro"/>
</dbReference>
<dbReference type="GO" id="GO:0043768">
    <property type="term" value="F:S-ribosylhomocysteine lyase activity"/>
    <property type="evidence" value="ECO:0007669"/>
    <property type="project" value="UniProtKB-UniRule"/>
</dbReference>
<dbReference type="GO" id="GO:0009372">
    <property type="term" value="P:quorum sensing"/>
    <property type="evidence" value="ECO:0007669"/>
    <property type="project" value="UniProtKB-UniRule"/>
</dbReference>
<dbReference type="Gene3D" id="3.30.1360.80">
    <property type="entry name" value="S-ribosylhomocysteinase (LuxS)"/>
    <property type="match status" value="1"/>
</dbReference>
<dbReference type="HAMAP" id="MF_00091">
    <property type="entry name" value="LuxS"/>
    <property type="match status" value="1"/>
</dbReference>
<dbReference type="InterPro" id="IPR037005">
    <property type="entry name" value="LuxS_sf"/>
</dbReference>
<dbReference type="InterPro" id="IPR011249">
    <property type="entry name" value="Metalloenz_LuxS/M16"/>
</dbReference>
<dbReference type="InterPro" id="IPR003815">
    <property type="entry name" value="S-ribosylhomocysteinase"/>
</dbReference>
<dbReference type="NCBIfam" id="NF002607">
    <property type="entry name" value="PRK02260.2-5"/>
    <property type="match status" value="1"/>
</dbReference>
<dbReference type="NCBIfam" id="NF002608">
    <property type="entry name" value="PRK02260.3-1"/>
    <property type="match status" value="1"/>
</dbReference>
<dbReference type="PANTHER" id="PTHR35799">
    <property type="entry name" value="S-RIBOSYLHOMOCYSTEINE LYASE"/>
    <property type="match status" value="1"/>
</dbReference>
<dbReference type="PANTHER" id="PTHR35799:SF1">
    <property type="entry name" value="S-RIBOSYLHOMOCYSTEINE LYASE"/>
    <property type="match status" value="1"/>
</dbReference>
<dbReference type="Pfam" id="PF02664">
    <property type="entry name" value="LuxS"/>
    <property type="match status" value="1"/>
</dbReference>
<dbReference type="PIRSF" id="PIRSF006160">
    <property type="entry name" value="AI2"/>
    <property type="match status" value="1"/>
</dbReference>
<dbReference type="PRINTS" id="PR01487">
    <property type="entry name" value="LUXSPROTEIN"/>
</dbReference>
<dbReference type="SUPFAM" id="SSF63411">
    <property type="entry name" value="LuxS/MPP-like metallohydrolase"/>
    <property type="match status" value="1"/>
</dbReference>
<proteinExistence type="inferred from homology"/>
<gene>
    <name evidence="1" type="primary">luxS</name>
    <name type="ordered locus">SPD_0309</name>
</gene>
<sequence>MSKEVIVESFELDHTIVKAPYVRLIGEETGPKGDIISNYDIRLVQPNEDSIPTAGLHTIEHLLAKLIRTRIDGMIDCSPFGCRTGFHMIMWGRHTSAKIAAVIKDSLKEIAETTTWEDVPGTTIESCGNYKDHSLFSAKEWAKLILEQGISDDAFERHVI</sequence>
<name>LUXS_STRP2</name>
<feature type="chain" id="PRO_0000298041" description="S-ribosylhomocysteine lyase">
    <location>
        <begin position="1"/>
        <end position="160"/>
    </location>
</feature>
<feature type="binding site" evidence="1">
    <location>
        <position position="57"/>
    </location>
    <ligand>
        <name>Fe cation</name>
        <dbReference type="ChEBI" id="CHEBI:24875"/>
    </ligand>
</feature>
<feature type="binding site" evidence="1">
    <location>
        <position position="61"/>
    </location>
    <ligand>
        <name>Fe cation</name>
        <dbReference type="ChEBI" id="CHEBI:24875"/>
    </ligand>
</feature>
<feature type="binding site" evidence="1">
    <location>
        <position position="127"/>
    </location>
    <ligand>
        <name>Fe cation</name>
        <dbReference type="ChEBI" id="CHEBI:24875"/>
    </ligand>
</feature>